<proteinExistence type="evidence at protein level"/>
<protein>
    <recommendedName>
        <fullName>Growth factor receptor-bound protein 14</fullName>
    </recommendedName>
    <alternativeName>
        <fullName>GRB14 adapter protein</fullName>
    </alternativeName>
</protein>
<accession>Q14449</accession>
<accession>B7Z7F9</accession>
<accession>Q7Z6I1</accession>
<keyword id="KW-0002">3D-structure</keyword>
<keyword id="KW-0007">Acetylation</keyword>
<keyword id="KW-0025">Alternative splicing</keyword>
<keyword id="KW-0963">Cytoplasm</keyword>
<keyword id="KW-0967">Endosome</keyword>
<keyword id="KW-0472">Membrane</keyword>
<keyword id="KW-0597">Phosphoprotein</keyword>
<keyword id="KW-1267">Proteomics identification</keyword>
<keyword id="KW-1185">Reference proteome</keyword>
<keyword id="KW-0727">SH2 domain</keyword>
<name>GRB14_HUMAN</name>
<comment type="function">
    <text evidence="8 10">Adapter protein which modulates coupling of cell surface receptor kinases with specific signaling pathways. Binds to, and suppresses signals from, the activated insulin receptor (INSR). Potent inhibitor of insulin-stimulated MAPK3 phosphorylation. Plays a critical role regulating PDPK1 membrane translocation in response to insulin stimulation and serves as an adapter protein to recruit PDPK1 to activated insulin receptor, thus promoting PKB/AKT1 phosphorylation and transduction of the insulin signal.</text>
</comment>
<comment type="subunit">
    <text evidence="1 7 8 9 10 11">Interacts with the cytoplasmic domain of the autophosphorylated insulin receptor (INSR), through the SH2 domain (By similarity). Interacts with GRB14 (via BPS domain); this interaction protects the tyrosines in the activation loop on INSR from dephosphorylation. Binds to the ankyrin repeat region of TNKS2 via its N-terminus. Interacts with activated NRAS. Interacts (via SH2 domain) with TEK/TIE2 (tyrosine phosphorylated).</text>
</comment>
<comment type="interaction">
    <interactant intactId="EBI-2680889">
        <id>Q14449</id>
    </interactant>
    <interactant intactId="EBI-618309">
        <id>Q08379</id>
        <label>GOLGA2</label>
    </interactant>
    <organismsDiffer>false</organismsDiffer>
    <experiments>3</experiments>
</comment>
<comment type="interaction">
    <interactant intactId="EBI-2680889">
        <id>Q14449</id>
    </interactant>
    <interactant intactId="EBI-719493">
        <id>P14373</id>
        <label>TRIM27</label>
    </interactant>
    <organismsDiffer>false</organismsDiffer>
    <experiments>3</experiments>
</comment>
<comment type="subcellular location">
    <subcellularLocation>
        <location evidence="8 10">Cytoplasm</location>
    </subcellularLocation>
    <subcellularLocation>
        <location evidence="8 10">Endosome membrane</location>
        <topology evidence="8 10">Peripheral membrane protein</topology>
    </subcellularLocation>
    <text evidence="8 10">Upon insulin stimulation, translocates to the plasma membrane.</text>
</comment>
<comment type="alternative products">
    <event type="alternative splicing"/>
    <isoform>
        <id>Q14449-1</id>
        <name>1</name>
        <sequence type="displayed"/>
    </isoform>
    <isoform>
        <id>Q14449-2</id>
        <name>2</name>
        <sequence type="described" ref="VSP_056582 VSP_056583"/>
    </isoform>
</comment>
<comment type="tissue specificity">
    <text>Expressed at high levels in the liver, kidney, pancreas, testis, ovary, heart and skeletal muscle.</text>
</comment>
<comment type="domain">
    <text evidence="10">The PH domain binds relatively non-specifically and with low affinity to several phosphoinositides, the best binder being PI(3,4,5)P3.</text>
</comment>
<comment type="PTM">
    <text evidence="11">Phosphorylated on serine residues. Phosphorylated on tyrosine residues by TEK/TIE2.</text>
</comment>
<comment type="similarity">
    <text evidence="15">Belongs to the GRB7/10/14 family.</text>
</comment>
<reference key="1">
    <citation type="journal article" date="1996" name="J. Biol. Chem.">
        <title>Cloning and characterization of GRB14, a novel member of the GRB7 gene family.</title>
        <authorList>
            <person name="Daly R.J."/>
            <person name="Sanderson G.M."/>
            <person name="Janes P.W."/>
            <person name="Sutherland R.L."/>
        </authorList>
    </citation>
    <scope>NUCLEOTIDE SEQUENCE [MRNA] (ISOFORM 1)</scope>
    <scope>VARIANT ILE-90</scope>
</reference>
<reference key="2">
    <citation type="journal article" date="2004" name="Nat. Genet.">
        <title>Complete sequencing and characterization of 21,243 full-length human cDNAs.</title>
        <authorList>
            <person name="Ota T."/>
            <person name="Suzuki Y."/>
            <person name="Nishikawa T."/>
            <person name="Otsuki T."/>
            <person name="Sugiyama T."/>
            <person name="Irie R."/>
            <person name="Wakamatsu A."/>
            <person name="Hayashi K."/>
            <person name="Sato H."/>
            <person name="Nagai K."/>
            <person name="Kimura K."/>
            <person name="Makita H."/>
            <person name="Sekine M."/>
            <person name="Obayashi M."/>
            <person name="Nishi T."/>
            <person name="Shibahara T."/>
            <person name="Tanaka T."/>
            <person name="Ishii S."/>
            <person name="Yamamoto J."/>
            <person name="Saito K."/>
            <person name="Kawai Y."/>
            <person name="Isono Y."/>
            <person name="Nakamura Y."/>
            <person name="Nagahari K."/>
            <person name="Murakami K."/>
            <person name="Yasuda T."/>
            <person name="Iwayanagi T."/>
            <person name="Wagatsuma M."/>
            <person name="Shiratori A."/>
            <person name="Sudo H."/>
            <person name="Hosoiri T."/>
            <person name="Kaku Y."/>
            <person name="Kodaira H."/>
            <person name="Kondo H."/>
            <person name="Sugawara M."/>
            <person name="Takahashi M."/>
            <person name="Kanda K."/>
            <person name="Yokoi T."/>
            <person name="Furuya T."/>
            <person name="Kikkawa E."/>
            <person name="Omura Y."/>
            <person name="Abe K."/>
            <person name="Kamihara K."/>
            <person name="Katsuta N."/>
            <person name="Sato K."/>
            <person name="Tanikawa M."/>
            <person name="Yamazaki M."/>
            <person name="Ninomiya K."/>
            <person name="Ishibashi T."/>
            <person name="Yamashita H."/>
            <person name="Murakawa K."/>
            <person name="Fujimori K."/>
            <person name="Tanai H."/>
            <person name="Kimata M."/>
            <person name="Watanabe M."/>
            <person name="Hiraoka S."/>
            <person name="Chiba Y."/>
            <person name="Ishida S."/>
            <person name="Ono Y."/>
            <person name="Takiguchi S."/>
            <person name="Watanabe S."/>
            <person name="Yosida M."/>
            <person name="Hotuta T."/>
            <person name="Kusano J."/>
            <person name="Kanehori K."/>
            <person name="Takahashi-Fujii A."/>
            <person name="Hara H."/>
            <person name="Tanase T.-O."/>
            <person name="Nomura Y."/>
            <person name="Togiya S."/>
            <person name="Komai F."/>
            <person name="Hara R."/>
            <person name="Takeuchi K."/>
            <person name="Arita M."/>
            <person name="Imose N."/>
            <person name="Musashino K."/>
            <person name="Yuuki H."/>
            <person name="Oshima A."/>
            <person name="Sasaki N."/>
            <person name="Aotsuka S."/>
            <person name="Yoshikawa Y."/>
            <person name="Matsunawa H."/>
            <person name="Ichihara T."/>
            <person name="Shiohata N."/>
            <person name="Sano S."/>
            <person name="Moriya S."/>
            <person name="Momiyama H."/>
            <person name="Satoh N."/>
            <person name="Takami S."/>
            <person name="Terashima Y."/>
            <person name="Suzuki O."/>
            <person name="Nakagawa S."/>
            <person name="Senoh A."/>
            <person name="Mizoguchi H."/>
            <person name="Goto Y."/>
            <person name="Shimizu F."/>
            <person name="Wakebe H."/>
            <person name="Hishigaki H."/>
            <person name="Watanabe T."/>
            <person name="Sugiyama A."/>
            <person name="Takemoto M."/>
            <person name="Kawakami B."/>
            <person name="Yamazaki M."/>
            <person name="Watanabe K."/>
            <person name="Kumagai A."/>
            <person name="Itakura S."/>
            <person name="Fukuzumi Y."/>
            <person name="Fujimori Y."/>
            <person name="Komiyama M."/>
            <person name="Tashiro H."/>
            <person name="Tanigami A."/>
            <person name="Fujiwara T."/>
            <person name="Ono T."/>
            <person name="Yamada K."/>
            <person name="Fujii Y."/>
            <person name="Ozaki K."/>
            <person name="Hirao M."/>
            <person name="Ohmori Y."/>
            <person name="Kawabata A."/>
            <person name="Hikiji T."/>
            <person name="Kobatake N."/>
            <person name="Inagaki H."/>
            <person name="Ikema Y."/>
            <person name="Okamoto S."/>
            <person name="Okitani R."/>
            <person name="Kawakami T."/>
            <person name="Noguchi S."/>
            <person name="Itoh T."/>
            <person name="Shigeta K."/>
            <person name="Senba T."/>
            <person name="Matsumura K."/>
            <person name="Nakajima Y."/>
            <person name="Mizuno T."/>
            <person name="Morinaga M."/>
            <person name="Sasaki M."/>
            <person name="Togashi T."/>
            <person name="Oyama M."/>
            <person name="Hata H."/>
            <person name="Watanabe M."/>
            <person name="Komatsu T."/>
            <person name="Mizushima-Sugano J."/>
            <person name="Satoh T."/>
            <person name="Shirai Y."/>
            <person name="Takahashi Y."/>
            <person name="Nakagawa K."/>
            <person name="Okumura K."/>
            <person name="Nagase T."/>
            <person name="Nomura N."/>
            <person name="Kikuchi H."/>
            <person name="Masuho Y."/>
            <person name="Yamashita R."/>
            <person name="Nakai K."/>
            <person name="Yada T."/>
            <person name="Nakamura Y."/>
            <person name="Ohara O."/>
            <person name="Isogai T."/>
            <person name="Sugano S."/>
        </authorList>
    </citation>
    <scope>NUCLEOTIDE SEQUENCE [LARGE SCALE MRNA] (ISOFORM 2)</scope>
    <source>
        <tissue>Testis</tissue>
    </source>
</reference>
<reference key="3">
    <citation type="journal article" date="2005" name="Nature">
        <title>Generation and annotation of the DNA sequences of human chromosomes 2 and 4.</title>
        <authorList>
            <person name="Hillier L.W."/>
            <person name="Graves T.A."/>
            <person name="Fulton R.S."/>
            <person name="Fulton L.A."/>
            <person name="Pepin K.H."/>
            <person name="Minx P."/>
            <person name="Wagner-McPherson C."/>
            <person name="Layman D."/>
            <person name="Wylie K."/>
            <person name="Sekhon M."/>
            <person name="Becker M.C."/>
            <person name="Fewell G.A."/>
            <person name="Delehaunty K.D."/>
            <person name="Miner T.L."/>
            <person name="Nash W.E."/>
            <person name="Kremitzki C."/>
            <person name="Oddy L."/>
            <person name="Du H."/>
            <person name="Sun H."/>
            <person name="Bradshaw-Cordum H."/>
            <person name="Ali J."/>
            <person name="Carter J."/>
            <person name="Cordes M."/>
            <person name="Harris A."/>
            <person name="Isak A."/>
            <person name="van Brunt A."/>
            <person name="Nguyen C."/>
            <person name="Du F."/>
            <person name="Courtney L."/>
            <person name="Kalicki J."/>
            <person name="Ozersky P."/>
            <person name="Abbott S."/>
            <person name="Armstrong J."/>
            <person name="Belter E.A."/>
            <person name="Caruso L."/>
            <person name="Cedroni M."/>
            <person name="Cotton M."/>
            <person name="Davidson T."/>
            <person name="Desai A."/>
            <person name="Elliott G."/>
            <person name="Erb T."/>
            <person name="Fronick C."/>
            <person name="Gaige T."/>
            <person name="Haakenson W."/>
            <person name="Haglund K."/>
            <person name="Holmes A."/>
            <person name="Harkins R."/>
            <person name="Kim K."/>
            <person name="Kruchowski S.S."/>
            <person name="Strong C.M."/>
            <person name="Grewal N."/>
            <person name="Goyea E."/>
            <person name="Hou S."/>
            <person name="Levy A."/>
            <person name="Martinka S."/>
            <person name="Mead K."/>
            <person name="McLellan M.D."/>
            <person name="Meyer R."/>
            <person name="Randall-Maher J."/>
            <person name="Tomlinson C."/>
            <person name="Dauphin-Kohlberg S."/>
            <person name="Kozlowicz-Reilly A."/>
            <person name="Shah N."/>
            <person name="Swearengen-Shahid S."/>
            <person name="Snider J."/>
            <person name="Strong J.T."/>
            <person name="Thompson J."/>
            <person name="Yoakum M."/>
            <person name="Leonard S."/>
            <person name="Pearman C."/>
            <person name="Trani L."/>
            <person name="Radionenko M."/>
            <person name="Waligorski J.E."/>
            <person name="Wang C."/>
            <person name="Rock S.M."/>
            <person name="Tin-Wollam A.-M."/>
            <person name="Maupin R."/>
            <person name="Latreille P."/>
            <person name="Wendl M.C."/>
            <person name="Yang S.-P."/>
            <person name="Pohl C."/>
            <person name="Wallis J.W."/>
            <person name="Spieth J."/>
            <person name="Bieri T.A."/>
            <person name="Berkowicz N."/>
            <person name="Nelson J.O."/>
            <person name="Osborne J."/>
            <person name="Ding L."/>
            <person name="Meyer R."/>
            <person name="Sabo A."/>
            <person name="Shotland Y."/>
            <person name="Sinha P."/>
            <person name="Wohldmann P.E."/>
            <person name="Cook L.L."/>
            <person name="Hickenbotham M.T."/>
            <person name="Eldred J."/>
            <person name="Williams D."/>
            <person name="Jones T.A."/>
            <person name="She X."/>
            <person name="Ciccarelli F.D."/>
            <person name="Izaurralde E."/>
            <person name="Taylor J."/>
            <person name="Schmutz J."/>
            <person name="Myers R.M."/>
            <person name="Cox D.R."/>
            <person name="Huang X."/>
            <person name="McPherson J.D."/>
            <person name="Mardis E.R."/>
            <person name="Clifton S.W."/>
            <person name="Warren W.C."/>
            <person name="Chinwalla A.T."/>
            <person name="Eddy S.R."/>
            <person name="Marra M.A."/>
            <person name="Ovcharenko I."/>
            <person name="Furey T.S."/>
            <person name="Miller W."/>
            <person name="Eichler E.E."/>
            <person name="Bork P."/>
            <person name="Suyama M."/>
            <person name="Torrents D."/>
            <person name="Waterston R.H."/>
            <person name="Wilson R.K."/>
        </authorList>
    </citation>
    <scope>NUCLEOTIDE SEQUENCE [LARGE SCALE GENOMIC DNA]</scope>
</reference>
<reference key="4">
    <citation type="submission" date="2005-07" db="EMBL/GenBank/DDBJ databases">
        <authorList>
            <person name="Mural R.J."/>
            <person name="Istrail S."/>
            <person name="Sutton G."/>
            <person name="Florea L."/>
            <person name="Halpern A.L."/>
            <person name="Mobarry C.M."/>
            <person name="Lippert R."/>
            <person name="Walenz B."/>
            <person name="Shatkay H."/>
            <person name="Dew I."/>
            <person name="Miller J.R."/>
            <person name="Flanigan M.J."/>
            <person name="Edwards N.J."/>
            <person name="Bolanos R."/>
            <person name="Fasulo D."/>
            <person name="Halldorsson B.V."/>
            <person name="Hannenhalli S."/>
            <person name="Turner R."/>
            <person name="Yooseph S."/>
            <person name="Lu F."/>
            <person name="Nusskern D.R."/>
            <person name="Shue B.C."/>
            <person name="Zheng X.H."/>
            <person name="Zhong F."/>
            <person name="Delcher A.L."/>
            <person name="Huson D.H."/>
            <person name="Kravitz S.A."/>
            <person name="Mouchard L."/>
            <person name="Reinert K."/>
            <person name="Remington K.A."/>
            <person name="Clark A.G."/>
            <person name="Waterman M.S."/>
            <person name="Eichler E.E."/>
            <person name="Adams M.D."/>
            <person name="Hunkapiller M.W."/>
            <person name="Myers E.W."/>
            <person name="Venter J.C."/>
        </authorList>
    </citation>
    <scope>NUCLEOTIDE SEQUENCE [LARGE SCALE GENOMIC DNA]</scope>
</reference>
<reference key="5">
    <citation type="journal article" date="2004" name="Genome Res.">
        <title>The status, quality, and expansion of the NIH full-length cDNA project: the Mammalian Gene Collection (MGC).</title>
        <authorList>
            <consortium name="The MGC Project Team"/>
        </authorList>
    </citation>
    <scope>NUCLEOTIDE SEQUENCE [LARGE SCALE MRNA] (ISOFORM 1)</scope>
    <source>
        <tissue>Skin</tissue>
    </source>
</reference>
<reference key="6">
    <citation type="journal article" date="2002" name="J. Biol. Chem.">
        <title>Inhibition of insulin receptor catalytic activity by the molecular adapter Grb14.</title>
        <authorList>
            <person name="Bereziat V."/>
            <person name="Kasus-Jacobi A."/>
            <person name="Perdereau D."/>
            <person name="Cariou B."/>
            <person name="Girard J."/>
            <person name="Burnol A.F."/>
        </authorList>
    </citation>
    <scope>INTERACTION WITH INSR</scope>
</reference>
<reference key="7">
    <citation type="journal article" date="2004" name="J. Biol. Chem.">
        <title>The adaptor protein Grb14 regulates the localization of 3-phosphoinositide-dependent kinase-1.</title>
        <authorList>
            <person name="King C.C."/>
            <person name="Newton A.C."/>
        </authorList>
    </citation>
    <scope>FUNCTION</scope>
    <scope>SUBCELLULAR LOCATION</scope>
    <scope>INTERACTION WITH PDPK1</scope>
</reference>
<reference key="8">
    <citation type="journal article" date="2009" name="Anal. Chem.">
        <title>Lys-N and trypsin cover complementary parts of the phosphoproteome in a refined SCX-based approach.</title>
        <authorList>
            <person name="Gauci S."/>
            <person name="Helbig A.O."/>
            <person name="Slijper M."/>
            <person name="Krijgsveld J."/>
            <person name="Heck A.J."/>
            <person name="Mohammed S."/>
        </authorList>
    </citation>
    <scope>ACETYLATION [LARGE SCALE ANALYSIS] AT THR-2</scope>
    <scope>CLEAVAGE OF INITIATOR METHIONINE [LARGE SCALE ANALYSIS]</scope>
    <scope>IDENTIFICATION BY MASS SPECTROMETRY [LARGE SCALE ANALYSIS]</scope>
</reference>
<reference key="9">
    <citation type="journal article" date="2009" name="Nat. Struct. Mol. Biol.">
        <title>Structural and functional studies of the Ras-associating and pleckstrin-homology domains of Grb10 and Grb14.</title>
        <authorList>
            <person name="Depetris R.S."/>
            <person name="Wu J."/>
            <person name="Hubbard S.R."/>
        </authorList>
    </citation>
    <scope>FUNCTION</scope>
    <scope>INTERACTION WITH NRAS</scope>
    <scope>PHOSPHOINOSITIDE-BINDING</scope>
    <scope>SUBCELLULAR LOCATION</scope>
    <scope>DOMAIN PH</scope>
    <scope>MUTAGENESIS OF LYS-140; GLU-245; GLN-246; LYS-252; GLY-299; GLN-348 AND ASN-349</scope>
</reference>
<reference key="10">
    <citation type="journal article" date="2009" name="Nat. Struct. Mol. Biol.">
        <authorList>
            <person name="Depetris R.S."/>
            <person name="Wu J."/>
            <person name="Hubbard S.R."/>
        </authorList>
    </citation>
    <scope>ERRATUM OF PUBMED:19648926</scope>
</reference>
<reference key="11">
    <citation type="journal article" date="2010" name="Cell Commun. Signal.">
        <title>Tyrosine phosphorylation of Grb14 by Tie2.</title>
        <authorList>
            <person name="Sturk C."/>
            <person name="Dumont D.J."/>
        </authorList>
    </citation>
    <scope>INTERACTION WITH TEK/TIE2</scope>
    <scope>PHOSPHORYLATION</scope>
</reference>
<reference key="12">
    <citation type="journal article" date="2014" name="J. Proteomics">
        <title>An enzyme assisted RP-RPLC approach for in-depth analysis of human liver phosphoproteome.</title>
        <authorList>
            <person name="Bian Y."/>
            <person name="Song C."/>
            <person name="Cheng K."/>
            <person name="Dong M."/>
            <person name="Wang F."/>
            <person name="Huang J."/>
            <person name="Sun D."/>
            <person name="Wang L."/>
            <person name="Ye M."/>
            <person name="Zou H."/>
        </authorList>
    </citation>
    <scope>PHOSPHORYLATION [LARGE SCALE ANALYSIS] AT THR-9 (ISOFORM 2)</scope>
    <scope>IDENTIFICATION BY MASS SPECTROMETRY [LARGE SCALE ANALYSIS]</scope>
    <source>
        <tissue>Liver</tissue>
    </source>
</reference>
<reference key="13">
    <citation type="journal article" date="2005" name="Mol. Cell">
        <title>Structural basis for inhibition of the insulin receptor by the adaptor protein Grb14.</title>
        <authorList>
            <person name="Depetris R.S."/>
            <person name="Hu J."/>
            <person name="Gimpelevich I."/>
            <person name="Holt L.J."/>
            <person name="Daly R.J."/>
            <person name="Hubbard S.R."/>
        </authorList>
    </citation>
    <scope>X-RAY CRYSTALLOGRAPHY (2.3 ANGSTROMS) OF 361-419 AND 433-537 IN COMPLEX WITH INSR</scope>
</reference>
<reference key="14">
    <citation type="journal article" date="2011" name="Arch. Neurol.">
        <title>Resequencing of 29 candidate genes in patients with familial and sporadic amyotrophic lateral sclerosis.</title>
        <authorList>
            <person name="Daoud H."/>
            <person name="Valdmanis P.N."/>
            <person name="Gros-Louis F."/>
            <person name="Belzil V."/>
            <person name="Spiegelman D."/>
            <person name="Henrion E."/>
            <person name="Diallo O."/>
            <person name="Desjarlais A."/>
            <person name="Gauthier J."/>
            <person name="Camu W."/>
            <person name="Dion P.A."/>
            <person name="Rouleau G.A."/>
        </authorList>
    </citation>
    <scope>VARIANTS ILE-90 AND TYR-507</scope>
</reference>
<gene>
    <name type="primary">GRB14</name>
</gene>
<sequence>MTTSLQDGQSAASRAAARDSPLAAQVCGAAQGRGDAHDLAPAPWLHARALLPLPDGTRGCAADRRKKKDLDVPEMPSIPNPFPELCCSPFTSVLSADLFPKANSRKKQVIKVYSEDETSRALDVPSDITARDVCQLLILKNHYIDDHSWTLFEHLPHIGVERTIEDHELVIEVLSNWGIEEENKLYFRKNYAKYEFFKNPMYFFPEHMVSFATETNGEISPTQILQMFLSSSTYPEIHGFLHAKEQGKKSWKKIYFFLRRSGLYFSTKGTSKEPRHLQFFSEFGNSDIYVSLAGKKKHGAPTNYGFCFKPNKAGGPRDLKMLCAEEEQSRTCWVTAIRLLKYGMQLYQNYMHPYQGRSGCSSQSISPMRSISENSLVAMDFSGQKSRVIENPTEALSVAVEEGLAWRKKGCLRLGTHGSPTASSQSSATNMAIHRSQPWFHHKISRDEAQRLIIQQGLVDGVFLVRDSQSNPKTFVLSMSHGQKIKHFQIIPVEDDGEMFHTLDDGHTRFTDLIQLVEFYQLNKGVLPCKLKHYCARIAL</sequence>
<evidence type="ECO:0000250" key="1"/>
<evidence type="ECO:0000250" key="2">
    <source>
        <dbReference type="UniProtKB" id="O88900"/>
    </source>
</evidence>
<evidence type="ECO:0000250" key="3">
    <source>
        <dbReference type="UniProtKB" id="Q9JLM9"/>
    </source>
</evidence>
<evidence type="ECO:0000255" key="4">
    <source>
        <dbReference type="PROSITE-ProRule" id="PRU00145"/>
    </source>
</evidence>
<evidence type="ECO:0000255" key="5">
    <source>
        <dbReference type="PROSITE-ProRule" id="PRU00166"/>
    </source>
</evidence>
<evidence type="ECO:0000255" key="6">
    <source>
        <dbReference type="PROSITE-ProRule" id="PRU00191"/>
    </source>
</evidence>
<evidence type="ECO:0000269" key="7">
    <source>
    </source>
</evidence>
<evidence type="ECO:0000269" key="8">
    <source>
    </source>
</evidence>
<evidence type="ECO:0000269" key="9">
    <source>
    </source>
</evidence>
<evidence type="ECO:0000269" key="10">
    <source>
    </source>
</evidence>
<evidence type="ECO:0000269" key="11">
    <source>
    </source>
</evidence>
<evidence type="ECO:0000269" key="12">
    <source>
    </source>
</evidence>
<evidence type="ECO:0000269" key="13">
    <source>
    </source>
</evidence>
<evidence type="ECO:0000303" key="14">
    <source>
    </source>
</evidence>
<evidence type="ECO:0000305" key="15"/>
<evidence type="ECO:0007744" key="16">
    <source>
    </source>
</evidence>
<evidence type="ECO:0007744" key="17">
    <source>
    </source>
</evidence>
<evidence type="ECO:0007829" key="18">
    <source>
        <dbReference type="PDB" id="2AUG"/>
    </source>
</evidence>
<evidence type="ECO:0007829" key="19">
    <source>
        <dbReference type="PDB" id="2AUH"/>
    </source>
</evidence>
<evidence type="ECO:0007829" key="20">
    <source>
        <dbReference type="PDB" id="4K81"/>
    </source>
</evidence>
<organism>
    <name type="scientific">Homo sapiens</name>
    <name type="common">Human</name>
    <dbReference type="NCBI Taxonomy" id="9606"/>
    <lineage>
        <taxon>Eukaryota</taxon>
        <taxon>Metazoa</taxon>
        <taxon>Chordata</taxon>
        <taxon>Craniata</taxon>
        <taxon>Vertebrata</taxon>
        <taxon>Euteleostomi</taxon>
        <taxon>Mammalia</taxon>
        <taxon>Eutheria</taxon>
        <taxon>Euarchontoglires</taxon>
        <taxon>Primates</taxon>
        <taxon>Haplorrhini</taxon>
        <taxon>Catarrhini</taxon>
        <taxon>Hominidae</taxon>
        <taxon>Homo</taxon>
    </lineage>
</organism>
<feature type="initiator methionine" description="Removed" evidence="16">
    <location>
        <position position="1"/>
    </location>
</feature>
<feature type="chain" id="PRO_0000150348" description="Growth factor receptor-bound protein 14">
    <location>
        <begin position="2"/>
        <end position="540"/>
    </location>
</feature>
<feature type="domain" description="Ras-associating" evidence="5">
    <location>
        <begin position="106"/>
        <end position="192"/>
    </location>
</feature>
<feature type="domain" description="PH" evidence="4">
    <location>
        <begin position="234"/>
        <end position="342"/>
    </location>
</feature>
<feature type="domain" description="SH2" evidence="6">
    <location>
        <begin position="439"/>
        <end position="535"/>
    </location>
</feature>
<feature type="modified residue" description="N-acetylthreonine" evidence="16">
    <location>
        <position position="2"/>
    </location>
</feature>
<feature type="modified residue" description="Phosphoserine" evidence="2">
    <location>
        <position position="372"/>
    </location>
</feature>
<feature type="modified residue" description="Phosphoserine" evidence="3">
    <location>
        <position position="375"/>
    </location>
</feature>
<feature type="splice variant" id="VSP_056582" description="In isoform 2." evidence="14">
    <original>MTTSLQDGQSAASRAAARDSP</original>
    <variation>MSLSARRVTLPAITPIILQKR</variation>
    <location>
        <begin position="1"/>
        <end position="21"/>
    </location>
</feature>
<feature type="splice variant" id="VSP_056583" description="In isoform 2." evidence="14">
    <location>
        <begin position="22"/>
        <end position="108"/>
    </location>
</feature>
<feature type="sequence variant" id="VAR_065758" description="In dbSNP:rs61748245." evidence="12 13">
    <original>F</original>
    <variation>I</variation>
    <location>
        <position position="90"/>
    </location>
</feature>
<feature type="sequence variant" id="VAR_065759" description="In a patient with amyotrophic lateral sclerosis; dbSNP:rs144301087." evidence="12">
    <original>H</original>
    <variation>Y</variation>
    <location>
        <position position="507"/>
    </location>
</feature>
<feature type="mutagenesis site" description="Partial loss of INSR-binding. Loss of inhibition of AKT1 activation. Loss of inhibition of MAPK3 phosphorylation. Loss of NRAS-binding." evidence="10">
    <original>K</original>
    <variation>A</variation>
    <location>
        <position position="140"/>
    </location>
</feature>
<feature type="mutagenesis site" description="4-fold increase in PI(3,4,5)P3-binding affinity; when associated with S-246." evidence="10">
    <original>E</original>
    <variation>G</variation>
    <location>
        <position position="245"/>
    </location>
</feature>
<feature type="mutagenesis site" description="4-fold increase in PI(3,4,5)P3-binding affinity; when associated with G-245." evidence="10">
    <original>Q</original>
    <variation>S</variation>
    <location>
        <position position="246"/>
    </location>
</feature>
<feature type="mutagenesis site" description="Partial loss of INSR-binding. Loss of inhibition of AKT1 activation. Loss of inhibition of MAPK3 phosphorylation. Loss of translocation to the plasma membrane upon insulin-stimulation. More than 3-fold decrease in PI(3,4,5)P3-binding affinity." evidence="10">
    <original>K</original>
    <variation>A</variation>
    <location>
        <position position="252"/>
    </location>
</feature>
<feature type="mutagenesis site" description="No effect on PI(3,4,5)P3-binding." evidence="10">
    <original>G</original>
    <variation>N</variation>
    <location>
        <position position="299"/>
    </location>
</feature>
<feature type="mutagenesis site" description="Loss of inhibition of AKT1 activation; when associated with A-349. Loss of inhibition of MAPK3 phosphorylation; when associated with A-349. No effect on INSR-binding; when associated with A-349." evidence="10">
    <original>Q</original>
    <variation>A</variation>
    <location>
        <position position="348"/>
    </location>
</feature>
<feature type="mutagenesis site" description="Loss of inhibition of AKT1 activation; when associated with A-348. Loss of inhibition of MAPK3 phosphorylation; when associated with A-348. No effect on INSR-binding; when associated with A-348." evidence="10">
    <original>N</original>
    <variation>A</variation>
    <location>
        <position position="349"/>
    </location>
</feature>
<feature type="strand" evidence="20">
    <location>
        <begin position="107"/>
        <end position="113"/>
    </location>
</feature>
<feature type="strand" evidence="20">
    <location>
        <begin position="119"/>
        <end position="125"/>
    </location>
</feature>
<feature type="helix" evidence="20">
    <location>
        <begin position="130"/>
        <end position="141"/>
    </location>
</feature>
<feature type="strand" evidence="20">
    <location>
        <begin position="149"/>
        <end position="155"/>
    </location>
</feature>
<feature type="turn" evidence="20">
    <location>
        <begin position="156"/>
        <end position="159"/>
    </location>
</feature>
<feature type="strand" evidence="20">
    <location>
        <begin position="160"/>
        <end position="163"/>
    </location>
</feature>
<feature type="helix" evidence="20">
    <location>
        <begin position="170"/>
        <end position="175"/>
    </location>
</feature>
<feature type="strand" evidence="20">
    <location>
        <begin position="184"/>
        <end position="189"/>
    </location>
</feature>
<feature type="helix" evidence="20">
    <location>
        <begin position="195"/>
        <end position="198"/>
    </location>
</feature>
<feature type="turn" evidence="20">
    <location>
        <begin position="201"/>
        <end position="203"/>
    </location>
</feature>
<feature type="turn" evidence="20">
    <location>
        <begin position="206"/>
        <end position="208"/>
    </location>
</feature>
<feature type="helix" evidence="20">
    <location>
        <begin position="221"/>
        <end position="229"/>
    </location>
</feature>
<feature type="strand" evidence="20">
    <location>
        <begin position="236"/>
        <end position="244"/>
    </location>
</feature>
<feature type="strand" evidence="20">
    <location>
        <begin position="251"/>
        <end position="259"/>
    </location>
</feature>
<feature type="strand" evidence="20">
    <location>
        <begin position="262"/>
        <end position="268"/>
    </location>
</feature>
<feature type="turn" evidence="20">
    <location>
        <begin position="274"/>
        <end position="276"/>
    </location>
</feature>
<feature type="strand" evidence="20">
    <location>
        <begin position="277"/>
        <end position="281"/>
    </location>
</feature>
<feature type="strand" evidence="20">
    <location>
        <begin position="283"/>
        <end position="291"/>
    </location>
</feature>
<feature type="turn" evidence="20">
    <location>
        <begin position="297"/>
        <end position="299"/>
    </location>
</feature>
<feature type="strand" evidence="20">
    <location>
        <begin position="301"/>
        <end position="303"/>
    </location>
</feature>
<feature type="strand" evidence="20">
    <location>
        <begin position="305"/>
        <end position="310"/>
    </location>
</feature>
<feature type="strand" evidence="20">
    <location>
        <begin position="312"/>
        <end position="315"/>
    </location>
</feature>
<feature type="strand" evidence="20">
    <location>
        <begin position="320"/>
        <end position="323"/>
    </location>
</feature>
<feature type="helix" evidence="20">
    <location>
        <begin position="327"/>
        <end position="342"/>
    </location>
</feature>
<feature type="helix" evidence="20">
    <location>
        <begin position="344"/>
        <end position="351"/>
    </location>
</feature>
<feature type="strand" evidence="19">
    <location>
        <begin position="377"/>
        <end position="380"/>
    </location>
</feature>
<feature type="strand" evidence="19">
    <location>
        <begin position="382"/>
        <end position="385"/>
    </location>
</feature>
<feature type="helix" evidence="19">
    <location>
        <begin position="392"/>
        <end position="407"/>
    </location>
</feature>
<feature type="helix" evidence="18">
    <location>
        <begin position="434"/>
        <end position="436"/>
    </location>
</feature>
<feature type="helix" evidence="18">
    <location>
        <begin position="446"/>
        <end position="454"/>
    </location>
</feature>
<feature type="turn" evidence="18">
    <location>
        <begin position="455"/>
        <end position="457"/>
    </location>
</feature>
<feature type="strand" evidence="18">
    <location>
        <begin position="462"/>
        <end position="467"/>
    </location>
</feature>
<feature type="strand" evidence="18">
    <location>
        <begin position="469"/>
        <end position="472"/>
    </location>
</feature>
<feature type="strand" evidence="18">
    <location>
        <begin position="475"/>
        <end position="481"/>
    </location>
</feature>
<feature type="strand" evidence="18">
    <location>
        <begin position="484"/>
        <end position="495"/>
    </location>
</feature>
<feature type="strand" evidence="18">
    <location>
        <begin position="498"/>
        <end position="504"/>
    </location>
</feature>
<feature type="strand" evidence="18">
    <location>
        <begin position="510"/>
        <end position="512"/>
    </location>
</feature>
<feature type="helix" evidence="18">
    <location>
        <begin position="513"/>
        <end position="520"/>
    </location>
</feature>
<feature type="strand" evidence="18">
    <location>
        <begin position="527"/>
        <end position="529"/>
    </location>
</feature>
<feature type="modified residue" description="Phosphothreonine" evidence="17">
    <location sequence="Q14449-2">
        <position position="9"/>
    </location>
</feature>
<dbReference type="EMBL" id="L76687">
    <property type="protein sequence ID" value="AAC15861.1"/>
    <property type="molecule type" value="mRNA"/>
</dbReference>
<dbReference type="EMBL" id="AK301961">
    <property type="protein sequence ID" value="BAH13595.1"/>
    <property type="molecule type" value="mRNA"/>
</dbReference>
<dbReference type="EMBL" id="AC107075">
    <property type="status" value="NOT_ANNOTATED_CDS"/>
    <property type="molecule type" value="Genomic_DNA"/>
</dbReference>
<dbReference type="EMBL" id="AC110086">
    <property type="status" value="NOT_ANNOTATED_CDS"/>
    <property type="molecule type" value="Genomic_DNA"/>
</dbReference>
<dbReference type="EMBL" id="CH471058">
    <property type="protein sequence ID" value="EAX11342.1"/>
    <property type="molecule type" value="Genomic_DNA"/>
</dbReference>
<dbReference type="EMBL" id="BC053559">
    <property type="protein sequence ID" value="AAH53559.1"/>
    <property type="molecule type" value="mRNA"/>
</dbReference>
<dbReference type="CCDS" id="CCDS2222.1">
    <molecule id="Q14449-1"/>
</dbReference>
<dbReference type="CCDS" id="CCDS92883.1">
    <molecule id="Q14449-2"/>
</dbReference>
<dbReference type="RefSeq" id="NP_001290351.1">
    <molecule id="Q14449-2"/>
    <property type="nucleotide sequence ID" value="NM_001303422.2"/>
</dbReference>
<dbReference type="RefSeq" id="NP_004481.2">
    <molecule id="Q14449-1"/>
    <property type="nucleotide sequence ID" value="NM_004490.3"/>
</dbReference>
<dbReference type="PDB" id="2AUG">
    <property type="method" value="X-ray"/>
    <property type="resolution" value="2.30 A"/>
    <property type="chains" value="A/B=433-537"/>
</dbReference>
<dbReference type="PDB" id="2AUH">
    <property type="method" value="X-ray"/>
    <property type="resolution" value="3.20 A"/>
    <property type="chains" value="B=361-419"/>
</dbReference>
<dbReference type="PDB" id="4K81">
    <property type="method" value="X-ray"/>
    <property type="resolution" value="2.40 A"/>
    <property type="chains" value="A/C/E/G=106-356"/>
</dbReference>
<dbReference type="PDBsum" id="2AUG"/>
<dbReference type="PDBsum" id="2AUH"/>
<dbReference type="PDBsum" id="4K81"/>
<dbReference type="SMR" id="Q14449"/>
<dbReference type="BioGRID" id="109145">
    <property type="interactions" value="27"/>
</dbReference>
<dbReference type="DIP" id="DIP-42605N"/>
<dbReference type="FunCoup" id="Q14449">
    <property type="interactions" value="1205"/>
</dbReference>
<dbReference type="IntAct" id="Q14449">
    <property type="interactions" value="15"/>
</dbReference>
<dbReference type="MINT" id="Q14449"/>
<dbReference type="STRING" id="9606.ENSP00000263915"/>
<dbReference type="GlyGen" id="Q14449">
    <property type="glycosylation" value="1 site, 1 O-linked glycan (1 site)"/>
</dbReference>
<dbReference type="iPTMnet" id="Q14449"/>
<dbReference type="PhosphoSitePlus" id="Q14449"/>
<dbReference type="BioMuta" id="GRB14"/>
<dbReference type="DMDM" id="59802920"/>
<dbReference type="jPOST" id="Q14449"/>
<dbReference type="MassIVE" id="Q14449"/>
<dbReference type="PaxDb" id="9606-ENSP00000263915"/>
<dbReference type="PeptideAtlas" id="Q14449"/>
<dbReference type="ProteomicsDB" id="59994">
    <molecule id="Q14449-1"/>
</dbReference>
<dbReference type="ProteomicsDB" id="6865"/>
<dbReference type="Pumba" id="Q14449"/>
<dbReference type="Antibodypedia" id="33757">
    <property type="antibodies" value="185 antibodies from 29 providers"/>
</dbReference>
<dbReference type="DNASU" id="2888"/>
<dbReference type="Ensembl" id="ENST00000263915.8">
    <molecule id="Q14449-1"/>
    <property type="protein sequence ID" value="ENSP00000263915.3"/>
    <property type="gene ID" value="ENSG00000115290.11"/>
</dbReference>
<dbReference type="Ensembl" id="ENST00000696453.2">
    <molecule id="Q14449-2"/>
    <property type="protein sequence ID" value="ENSP00000512640.1"/>
    <property type="gene ID" value="ENSG00000115290.11"/>
</dbReference>
<dbReference type="GeneID" id="2888"/>
<dbReference type="KEGG" id="hsa:2888"/>
<dbReference type="MANE-Select" id="ENST00000263915.8">
    <property type="protein sequence ID" value="ENSP00000263915.3"/>
    <property type="RefSeq nucleotide sequence ID" value="NM_004490.3"/>
    <property type="RefSeq protein sequence ID" value="NP_004481.2"/>
</dbReference>
<dbReference type="UCSC" id="uc002ucl.4">
    <molecule id="Q14449-1"/>
    <property type="organism name" value="human"/>
</dbReference>
<dbReference type="AGR" id="HGNC:4565"/>
<dbReference type="CTD" id="2888"/>
<dbReference type="DisGeNET" id="2888"/>
<dbReference type="GeneCards" id="GRB14"/>
<dbReference type="HGNC" id="HGNC:4565">
    <property type="gene designation" value="GRB14"/>
</dbReference>
<dbReference type="HPA" id="ENSG00000115290">
    <property type="expression patterns" value="Tissue enhanced (epididymis, liver, tongue)"/>
</dbReference>
<dbReference type="MIM" id="601524">
    <property type="type" value="gene"/>
</dbReference>
<dbReference type="neXtProt" id="NX_Q14449"/>
<dbReference type="OpenTargets" id="ENSG00000115290"/>
<dbReference type="PharmGKB" id="PA28961"/>
<dbReference type="VEuPathDB" id="HostDB:ENSG00000115290"/>
<dbReference type="eggNOG" id="KOG3751">
    <property type="taxonomic scope" value="Eukaryota"/>
</dbReference>
<dbReference type="GeneTree" id="ENSGT00940000158609"/>
<dbReference type="HOGENOM" id="CLU_023207_0_1_1"/>
<dbReference type="InParanoid" id="Q14449"/>
<dbReference type="OMA" id="VEVHSKW"/>
<dbReference type="OrthoDB" id="5990423at2759"/>
<dbReference type="PAN-GO" id="Q14449">
    <property type="GO annotations" value="4 GO annotations based on evolutionary models"/>
</dbReference>
<dbReference type="PhylomeDB" id="Q14449"/>
<dbReference type="TreeFam" id="TF317511"/>
<dbReference type="PathwayCommons" id="Q14449"/>
<dbReference type="Reactome" id="R-HSA-210993">
    <property type="pathway name" value="Tie2 Signaling"/>
</dbReference>
<dbReference type="SignaLink" id="Q14449"/>
<dbReference type="SIGNOR" id="Q14449"/>
<dbReference type="BioGRID-ORCS" id="2888">
    <property type="hits" value="8 hits in 1146 CRISPR screens"/>
</dbReference>
<dbReference type="ChiTaRS" id="GRB14">
    <property type="organism name" value="human"/>
</dbReference>
<dbReference type="EvolutionaryTrace" id="Q14449"/>
<dbReference type="GeneWiki" id="GRB14"/>
<dbReference type="GenomeRNAi" id="2888"/>
<dbReference type="Pharos" id="Q14449">
    <property type="development level" value="Tbio"/>
</dbReference>
<dbReference type="PRO" id="PR:Q14449"/>
<dbReference type="Proteomes" id="UP000005640">
    <property type="component" value="Chromosome 2"/>
</dbReference>
<dbReference type="RNAct" id="Q14449">
    <property type="molecule type" value="protein"/>
</dbReference>
<dbReference type="Bgee" id="ENSG00000115290">
    <property type="expression patterns" value="Expressed in adrenal tissue and 132 other cell types or tissues"/>
</dbReference>
<dbReference type="ExpressionAtlas" id="Q14449">
    <property type="expression patterns" value="baseline and differential"/>
</dbReference>
<dbReference type="GO" id="GO:0005737">
    <property type="term" value="C:cytoplasm"/>
    <property type="evidence" value="ECO:0000314"/>
    <property type="project" value="BHF-UCL"/>
</dbReference>
<dbReference type="GO" id="GO:0005829">
    <property type="term" value="C:cytosol"/>
    <property type="evidence" value="ECO:0000304"/>
    <property type="project" value="Reactome"/>
</dbReference>
<dbReference type="GO" id="GO:0010008">
    <property type="term" value="C:endosome membrane"/>
    <property type="evidence" value="ECO:0007669"/>
    <property type="project" value="UniProtKB-SubCell"/>
</dbReference>
<dbReference type="GO" id="GO:0043231">
    <property type="term" value="C:intracellular membrane-bounded organelle"/>
    <property type="evidence" value="ECO:0000314"/>
    <property type="project" value="BHF-UCL"/>
</dbReference>
<dbReference type="GO" id="GO:0005886">
    <property type="term" value="C:plasma membrane"/>
    <property type="evidence" value="ECO:0000314"/>
    <property type="project" value="BHF-UCL"/>
</dbReference>
<dbReference type="GO" id="GO:0060090">
    <property type="term" value="F:molecular adaptor activity"/>
    <property type="evidence" value="ECO:0000269"/>
    <property type="project" value="DisProt"/>
</dbReference>
<dbReference type="GO" id="GO:0030674">
    <property type="term" value="F:protein-macromolecule adaptor activity"/>
    <property type="evidence" value="ECO:0007669"/>
    <property type="project" value="Ensembl"/>
</dbReference>
<dbReference type="GO" id="GO:0030971">
    <property type="term" value="F:receptor tyrosine kinase binding"/>
    <property type="evidence" value="ECO:0000353"/>
    <property type="project" value="CAFA"/>
</dbReference>
<dbReference type="GO" id="GO:0008286">
    <property type="term" value="P:insulin receptor signaling pathway"/>
    <property type="evidence" value="ECO:0000318"/>
    <property type="project" value="GO_Central"/>
</dbReference>
<dbReference type="GO" id="GO:0046627">
    <property type="term" value="P:negative regulation of insulin receptor signaling pathway"/>
    <property type="evidence" value="ECO:0000315"/>
    <property type="project" value="CAFA"/>
</dbReference>
<dbReference type="GO" id="GO:0007165">
    <property type="term" value="P:signal transduction"/>
    <property type="evidence" value="ECO:0000304"/>
    <property type="project" value="ProtInc"/>
</dbReference>
<dbReference type="CDD" id="cd01259">
    <property type="entry name" value="PH_APBB1IP"/>
    <property type="match status" value="1"/>
</dbReference>
<dbReference type="CDD" id="cd16139">
    <property type="entry name" value="RA_GRB14"/>
    <property type="match status" value="1"/>
</dbReference>
<dbReference type="CDD" id="cd10414">
    <property type="entry name" value="SH2_Grb14"/>
    <property type="match status" value="1"/>
</dbReference>
<dbReference type="DisProt" id="DP00230"/>
<dbReference type="FunFam" id="3.30.505.10:FF:000015">
    <property type="entry name" value="Growth factor receptor-bound protein 10 isoform X1"/>
    <property type="match status" value="1"/>
</dbReference>
<dbReference type="FunFam" id="2.30.29.30:FF:000714">
    <property type="entry name" value="Growth factor receptor-bound protein 14"/>
    <property type="match status" value="1"/>
</dbReference>
<dbReference type="FunFam" id="3.10.20.90:FF:000133">
    <property type="entry name" value="growth factor receptor-bound protein 14 isoform X2"/>
    <property type="match status" value="1"/>
</dbReference>
<dbReference type="Gene3D" id="3.10.20.90">
    <property type="entry name" value="Phosphatidylinositol 3-kinase Catalytic Subunit, Chain A, domain 1"/>
    <property type="match status" value="1"/>
</dbReference>
<dbReference type="Gene3D" id="2.30.29.30">
    <property type="entry name" value="Pleckstrin-homology domain (PH domain)/Phosphotyrosine-binding domain (PTB)"/>
    <property type="match status" value="1"/>
</dbReference>
<dbReference type="Gene3D" id="3.30.505.10">
    <property type="entry name" value="SH2 domain"/>
    <property type="match status" value="1"/>
</dbReference>
<dbReference type="InterPro" id="IPR015042">
    <property type="entry name" value="BPS-dom"/>
</dbReference>
<dbReference type="InterPro" id="IPR039664">
    <property type="entry name" value="GRB/APBB1IP"/>
</dbReference>
<dbReference type="InterPro" id="IPR035034">
    <property type="entry name" value="Grb14_SH2"/>
</dbReference>
<dbReference type="InterPro" id="IPR011993">
    <property type="entry name" value="PH-like_dom_sf"/>
</dbReference>
<dbReference type="InterPro" id="IPR039665">
    <property type="entry name" value="PH_APBB1IP"/>
</dbReference>
<dbReference type="InterPro" id="IPR001849">
    <property type="entry name" value="PH_domain"/>
</dbReference>
<dbReference type="InterPro" id="IPR000159">
    <property type="entry name" value="RA_dom"/>
</dbReference>
<dbReference type="InterPro" id="IPR000980">
    <property type="entry name" value="SH2"/>
</dbReference>
<dbReference type="InterPro" id="IPR036860">
    <property type="entry name" value="SH2_dom_sf"/>
</dbReference>
<dbReference type="InterPro" id="IPR029071">
    <property type="entry name" value="Ubiquitin-like_domsf"/>
</dbReference>
<dbReference type="PANTHER" id="PTHR11243">
    <property type="entry name" value="GROWTH FACTOR RECEPTOR-BOUND PROTEIN"/>
    <property type="match status" value="1"/>
</dbReference>
<dbReference type="PANTHER" id="PTHR11243:SF22">
    <property type="entry name" value="GROWTH FACTOR RECEPTOR-BOUND PROTEIN 14"/>
    <property type="match status" value="1"/>
</dbReference>
<dbReference type="Pfam" id="PF08947">
    <property type="entry name" value="BPS"/>
    <property type="match status" value="1"/>
</dbReference>
<dbReference type="Pfam" id="PF00169">
    <property type="entry name" value="PH"/>
    <property type="match status" value="1"/>
</dbReference>
<dbReference type="Pfam" id="PF21989">
    <property type="entry name" value="RA_2"/>
    <property type="match status" value="1"/>
</dbReference>
<dbReference type="Pfam" id="PF00017">
    <property type="entry name" value="SH2"/>
    <property type="match status" value="1"/>
</dbReference>
<dbReference type="PRINTS" id="PR00401">
    <property type="entry name" value="SH2DOMAIN"/>
</dbReference>
<dbReference type="SMART" id="SM00233">
    <property type="entry name" value="PH"/>
    <property type="match status" value="1"/>
</dbReference>
<dbReference type="SMART" id="SM00314">
    <property type="entry name" value="RA"/>
    <property type="match status" value="1"/>
</dbReference>
<dbReference type="SMART" id="SM00252">
    <property type="entry name" value="SH2"/>
    <property type="match status" value="1"/>
</dbReference>
<dbReference type="SUPFAM" id="SSF50729">
    <property type="entry name" value="PH domain-like"/>
    <property type="match status" value="1"/>
</dbReference>
<dbReference type="SUPFAM" id="SSF55550">
    <property type="entry name" value="SH2 domain"/>
    <property type="match status" value="1"/>
</dbReference>
<dbReference type="SUPFAM" id="SSF54236">
    <property type="entry name" value="Ubiquitin-like"/>
    <property type="match status" value="1"/>
</dbReference>
<dbReference type="PROSITE" id="PS50003">
    <property type="entry name" value="PH_DOMAIN"/>
    <property type="match status" value="1"/>
</dbReference>
<dbReference type="PROSITE" id="PS50200">
    <property type="entry name" value="RA"/>
    <property type="match status" value="1"/>
</dbReference>
<dbReference type="PROSITE" id="PS50001">
    <property type="entry name" value="SH2"/>
    <property type="match status" value="1"/>
</dbReference>